<feature type="chain" id="PRO_0000089697" description="DENN domain-containing protein 4C">
    <location>
        <begin position="1"/>
        <end position="1909"/>
    </location>
</feature>
<feature type="domain" description="MABP" evidence="4">
    <location>
        <begin position="40"/>
        <end position="199"/>
    </location>
</feature>
<feature type="domain" description="uDENN" evidence="3">
    <location>
        <begin position="191"/>
        <end position="364"/>
    </location>
</feature>
<feature type="domain" description="cDENN" evidence="3">
    <location>
        <begin position="385"/>
        <end position="521"/>
    </location>
</feature>
<feature type="domain" description="dDENN" evidence="3">
    <location>
        <begin position="523"/>
        <end position="641"/>
    </location>
</feature>
<feature type="repeat" description="PPR">
    <location>
        <begin position="821"/>
        <end position="855"/>
    </location>
</feature>
<feature type="region of interest" description="Disordered" evidence="5">
    <location>
        <begin position="1243"/>
        <end position="1263"/>
    </location>
</feature>
<feature type="region of interest" description="Disordered" evidence="5">
    <location>
        <begin position="1277"/>
        <end position="1338"/>
    </location>
</feature>
<feature type="region of interest" description="Disordered" evidence="5">
    <location>
        <begin position="1419"/>
        <end position="1474"/>
    </location>
</feature>
<feature type="compositionally biased region" description="Polar residues" evidence="5">
    <location>
        <begin position="1296"/>
        <end position="1316"/>
    </location>
</feature>
<feature type="compositionally biased region" description="Low complexity" evidence="5">
    <location>
        <begin position="1426"/>
        <end position="1440"/>
    </location>
</feature>
<feature type="compositionally biased region" description="Basic and acidic residues" evidence="5">
    <location>
        <begin position="1459"/>
        <end position="1468"/>
    </location>
</feature>
<feature type="modified residue" description="Phosphoserine" evidence="13">
    <location>
        <position position="703"/>
    </location>
</feature>
<feature type="modified residue" description="Phosphoserine" evidence="13">
    <location>
        <position position="737"/>
    </location>
</feature>
<feature type="modified residue" description="Phosphoserine" evidence="9 13">
    <location>
        <position position="741"/>
    </location>
</feature>
<feature type="modified residue" description="Phosphoserine" evidence="9 14">
    <location>
        <position position="965"/>
    </location>
</feature>
<feature type="modified residue" description="Phosphoserine" evidence="9 13 14">
    <location>
        <position position="968"/>
    </location>
</feature>
<feature type="modified residue" description="Phosphoserine" evidence="9 10 13 14">
    <location>
        <position position="973"/>
    </location>
</feature>
<feature type="modified residue" description="Phosphothreonine" evidence="14">
    <location>
        <position position="975"/>
    </location>
</feature>
<feature type="modified residue" description="Phosphoserine" evidence="9 10 13 14">
    <location>
        <position position="989"/>
    </location>
</feature>
<feature type="modified residue" description="Phosphoserine" evidence="13">
    <location>
        <position position="996"/>
    </location>
</feature>
<feature type="modified residue" description="Phosphoserine" evidence="9">
    <location>
        <position position="1003"/>
    </location>
</feature>
<feature type="modified residue" description="Phosphoserine" evidence="9">
    <location>
        <position position="1046"/>
    </location>
</feature>
<feature type="modified residue" description="Phosphoserine" evidence="13">
    <location>
        <position position="1061"/>
    </location>
</feature>
<feature type="modified residue" description="Phosphoserine" evidence="9 13">
    <location>
        <position position="1099"/>
    </location>
</feature>
<feature type="modified residue" description="Phosphoserine" evidence="9">
    <location>
        <position position="1126"/>
    </location>
</feature>
<feature type="modified residue" description="Phosphoserine" evidence="12 13">
    <location>
        <position position="1184"/>
    </location>
</feature>
<feature type="modified residue" description="Phosphoserine" evidence="9 11 13">
    <location>
        <position position="1225"/>
    </location>
</feature>
<feature type="modified residue" description="Phosphoserine" evidence="9">
    <location>
        <position position="1244"/>
    </location>
</feature>
<feature type="modified residue" description="Phosphoserine" evidence="2">
    <location>
        <position position="1252"/>
    </location>
</feature>
<feature type="modified residue" description="Phosphoserine" evidence="9 10 13 14">
    <location>
        <position position="1278"/>
    </location>
</feature>
<feature type="modified residue" description="Phosphoserine" evidence="9 13">
    <location>
        <position position="1325"/>
    </location>
</feature>
<feature type="modified residue" description="Phosphoserine" evidence="13">
    <location>
        <position position="1337"/>
    </location>
</feature>
<feature type="modified residue" description="Phosphoserine" evidence="10 13">
    <location>
        <position position="1346"/>
    </location>
</feature>
<feature type="modified residue" description="Phosphoserine" evidence="9 11 13">
    <location>
        <position position="1623"/>
    </location>
</feature>
<feature type="modified residue" description="Phosphoserine" evidence="9">
    <location>
        <position position="1627"/>
    </location>
</feature>
<feature type="modified residue" description="Phosphoserine" evidence="13">
    <location>
        <position position="1629"/>
    </location>
</feature>
<feature type="modified residue" description="Phosphoserine" evidence="2">
    <location>
        <position position="1640"/>
    </location>
</feature>
<feature type="modified residue" description="Phosphoserine" evidence="14">
    <location>
        <position position="1799"/>
    </location>
</feature>
<feature type="splice variant" id="VSP_027379" description="In isoform 2." evidence="8">
    <original>S</original>
    <variation>SALQNVTGGSDGDTVSHGSVDSSNDANNGEHTVFVRDLIRLESIDNHSST</variation>
    <location>
        <position position="911"/>
    </location>
</feature>
<feature type="splice variant" id="VSP_027382" description="In isoform 5." evidence="7">
    <original>SDEIKRASGDVQTMKISS</original>
    <variation>RYQRVQRPLYVVINGVPL</variation>
    <location>
        <begin position="1606"/>
        <end position="1623"/>
    </location>
</feature>
<feature type="splice variant" id="VSP_027383" description="In isoform 5." evidence="7">
    <location>
        <begin position="1624"/>
        <end position="1909"/>
    </location>
</feature>
<feature type="splice variant" id="VSP_027384" description="In isoform 3." evidence="7">
    <original>SL</original>
    <variation>GI</variation>
    <location>
        <begin position="1844"/>
        <end position="1845"/>
    </location>
</feature>
<feature type="splice variant" id="VSP_027386" description="In isoform 3." evidence="7">
    <location>
        <begin position="1846"/>
        <end position="1909"/>
    </location>
</feature>
<feature type="sequence variant" id="VAR_061640" description="In dbSNP:rs34267952.">
    <original>V</original>
    <variation>G</variation>
    <location>
        <position position="1227"/>
    </location>
</feature>
<feature type="sequence variant" id="VAR_022891" description="In dbSNP:rs17818730.">
    <original>T</original>
    <variation>A</variation>
    <location>
        <position position="1266"/>
    </location>
</feature>
<feature type="sequence variant" id="VAR_022892" description="In dbSNP:rs6475322.">
    <original>N</original>
    <variation>H</variation>
    <location>
        <position position="1343"/>
    </location>
</feature>
<feature type="sequence conflict" description="In Ref. 3; BAC86313." evidence="8" ref="3">
    <original>S</original>
    <variation>G</variation>
    <location>
        <position position="683"/>
    </location>
</feature>
<feature type="sequence conflict" description="In Ref. 3; BAA91294." evidence="8" ref="3">
    <original>S</original>
    <variation>P</variation>
    <location>
        <position position="1297"/>
    </location>
</feature>
<feature type="sequence conflict" description="In Ref. 3; BAA91478." evidence="8" ref="3">
    <original>H</original>
    <variation>R</variation>
    <location>
        <position position="1656"/>
    </location>
</feature>
<feature type="sequence conflict" description="In Ref. 3; BAA92039." evidence="8" ref="3">
    <original>Q</original>
    <variation>H</variation>
    <location>
        <position position="1769"/>
    </location>
</feature>
<feature type="sequence conflict" description="In Ref. 4; CAH10466." evidence="8" ref="4">
    <original>I</original>
    <variation>V</variation>
    <location>
        <position position="1862"/>
    </location>
</feature>
<feature type="sequence conflict" description="In Ref. 4; CAH10466." evidence="8" ref="4">
    <original>D</original>
    <variation>G</variation>
    <location>
        <position position="1868"/>
    </location>
</feature>
<feature type="sequence conflict" description="In Ref. 4; CAD39177." evidence="8" ref="4">
    <original>P</original>
    <variation>A</variation>
    <location>
        <position position="1893"/>
    </location>
</feature>
<feature type="sequence conflict" description="In Ref. 4; CAH10466." evidence="8" ref="4">
    <original>V</original>
    <variation>A</variation>
    <location>
        <position position="1897"/>
    </location>
</feature>
<feature type="modified residue" description="Phosphoserine" evidence="11 14">
    <location sequence="Q5VZ89-7">
        <position position="953"/>
    </location>
</feature>
<reference key="1">
    <citation type="journal article" date="2004" name="Nature">
        <title>DNA sequence and analysis of human chromosome 9.</title>
        <authorList>
            <person name="Humphray S.J."/>
            <person name="Oliver K."/>
            <person name="Hunt A.R."/>
            <person name="Plumb R.W."/>
            <person name="Loveland J.E."/>
            <person name="Howe K.L."/>
            <person name="Andrews T.D."/>
            <person name="Searle S."/>
            <person name="Hunt S.E."/>
            <person name="Scott C.E."/>
            <person name="Jones M.C."/>
            <person name="Ainscough R."/>
            <person name="Almeida J.P."/>
            <person name="Ambrose K.D."/>
            <person name="Ashwell R.I.S."/>
            <person name="Babbage A.K."/>
            <person name="Babbage S."/>
            <person name="Bagguley C.L."/>
            <person name="Bailey J."/>
            <person name="Banerjee R."/>
            <person name="Barker D.J."/>
            <person name="Barlow K.F."/>
            <person name="Bates K."/>
            <person name="Beasley H."/>
            <person name="Beasley O."/>
            <person name="Bird C.P."/>
            <person name="Bray-Allen S."/>
            <person name="Brown A.J."/>
            <person name="Brown J.Y."/>
            <person name="Burford D."/>
            <person name="Burrill W."/>
            <person name="Burton J."/>
            <person name="Carder C."/>
            <person name="Carter N.P."/>
            <person name="Chapman J.C."/>
            <person name="Chen Y."/>
            <person name="Clarke G."/>
            <person name="Clark S.Y."/>
            <person name="Clee C.M."/>
            <person name="Clegg S."/>
            <person name="Collier R.E."/>
            <person name="Corby N."/>
            <person name="Crosier M."/>
            <person name="Cummings A.T."/>
            <person name="Davies J."/>
            <person name="Dhami P."/>
            <person name="Dunn M."/>
            <person name="Dutta I."/>
            <person name="Dyer L.W."/>
            <person name="Earthrowl M.E."/>
            <person name="Faulkner L."/>
            <person name="Fleming C.J."/>
            <person name="Frankish A."/>
            <person name="Frankland J.A."/>
            <person name="French L."/>
            <person name="Fricker D.G."/>
            <person name="Garner P."/>
            <person name="Garnett J."/>
            <person name="Ghori J."/>
            <person name="Gilbert J.G.R."/>
            <person name="Glison C."/>
            <person name="Grafham D.V."/>
            <person name="Gribble S."/>
            <person name="Griffiths C."/>
            <person name="Griffiths-Jones S."/>
            <person name="Grocock R."/>
            <person name="Guy J."/>
            <person name="Hall R.E."/>
            <person name="Hammond S."/>
            <person name="Harley J.L."/>
            <person name="Harrison E.S.I."/>
            <person name="Hart E.A."/>
            <person name="Heath P.D."/>
            <person name="Henderson C.D."/>
            <person name="Hopkins B.L."/>
            <person name="Howard P.J."/>
            <person name="Howden P.J."/>
            <person name="Huckle E."/>
            <person name="Johnson C."/>
            <person name="Johnson D."/>
            <person name="Joy A.A."/>
            <person name="Kay M."/>
            <person name="Keenan S."/>
            <person name="Kershaw J.K."/>
            <person name="Kimberley A.M."/>
            <person name="King A."/>
            <person name="Knights A."/>
            <person name="Laird G.K."/>
            <person name="Langford C."/>
            <person name="Lawlor S."/>
            <person name="Leongamornlert D.A."/>
            <person name="Leversha M."/>
            <person name="Lloyd C."/>
            <person name="Lloyd D.M."/>
            <person name="Lovell J."/>
            <person name="Martin S."/>
            <person name="Mashreghi-Mohammadi M."/>
            <person name="Matthews L."/>
            <person name="McLaren S."/>
            <person name="McLay K.E."/>
            <person name="McMurray A."/>
            <person name="Milne S."/>
            <person name="Nickerson T."/>
            <person name="Nisbett J."/>
            <person name="Nordsiek G."/>
            <person name="Pearce A.V."/>
            <person name="Peck A.I."/>
            <person name="Porter K.M."/>
            <person name="Pandian R."/>
            <person name="Pelan S."/>
            <person name="Phillimore B."/>
            <person name="Povey S."/>
            <person name="Ramsey Y."/>
            <person name="Rand V."/>
            <person name="Scharfe M."/>
            <person name="Sehra H.K."/>
            <person name="Shownkeen R."/>
            <person name="Sims S.K."/>
            <person name="Skuce C.D."/>
            <person name="Smith M."/>
            <person name="Steward C.A."/>
            <person name="Swarbreck D."/>
            <person name="Sycamore N."/>
            <person name="Tester J."/>
            <person name="Thorpe A."/>
            <person name="Tracey A."/>
            <person name="Tromans A."/>
            <person name="Thomas D.W."/>
            <person name="Wall M."/>
            <person name="Wallis J.M."/>
            <person name="West A.P."/>
            <person name="Whitehead S.L."/>
            <person name="Willey D.L."/>
            <person name="Williams S.A."/>
            <person name="Wilming L."/>
            <person name="Wray P.W."/>
            <person name="Young L."/>
            <person name="Ashurst J.L."/>
            <person name="Coulson A."/>
            <person name="Blocker H."/>
            <person name="Durbin R.M."/>
            <person name="Sulston J.E."/>
            <person name="Hubbard T."/>
            <person name="Jackson M.J."/>
            <person name="Bentley D.R."/>
            <person name="Beck S."/>
            <person name="Rogers J."/>
            <person name="Dunham I."/>
        </authorList>
    </citation>
    <scope>NUCLEOTIDE SEQUENCE [LARGE SCALE GENOMIC DNA]</scope>
</reference>
<reference key="2">
    <citation type="submission" date="2005-09" db="EMBL/GenBank/DDBJ databases">
        <authorList>
            <person name="Mural R.J."/>
            <person name="Istrail S."/>
            <person name="Sutton G.G."/>
            <person name="Florea L."/>
            <person name="Halpern A.L."/>
            <person name="Mobarry C.M."/>
            <person name="Lippert R."/>
            <person name="Walenz B."/>
            <person name="Shatkay H."/>
            <person name="Dew I."/>
            <person name="Miller J.R."/>
            <person name="Flanigan M.J."/>
            <person name="Edwards N.J."/>
            <person name="Bolanos R."/>
            <person name="Fasulo D."/>
            <person name="Halldorsson B.V."/>
            <person name="Hannenhalli S."/>
            <person name="Turner R."/>
            <person name="Yooseph S."/>
            <person name="Lu F."/>
            <person name="Nusskern D.R."/>
            <person name="Shue B.C."/>
            <person name="Zheng X.H."/>
            <person name="Zhong F."/>
            <person name="Delcher A.L."/>
            <person name="Huson D.H."/>
            <person name="Kravitz S.A."/>
            <person name="Mouchard L."/>
            <person name="Reinert K."/>
            <person name="Remington K.A."/>
            <person name="Clark A.G."/>
            <person name="Waterman M.S."/>
            <person name="Eichler E.E."/>
            <person name="Adams M.D."/>
            <person name="Hunkapiller M.W."/>
            <person name="Myers E.W."/>
            <person name="Venter J.C."/>
        </authorList>
    </citation>
    <scope>NUCLEOTIDE SEQUENCE [LARGE SCALE GENOMIC DNA]</scope>
</reference>
<reference key="3">
    <citation type="journal article" date="2004" name="Nat. Genet.">
        <title>Complete sequencing and characterization of 21,243 full-length human cDNAs.</title>
        <authorList>
            <person name="Ota T."/>
            <person name="Suzuki Y."/>
            <person name="Nishikawa T."/>
            <person name="Otsuki T."/>
            <person name="Sugiyama T."/>
            <person name="Irie R."/>
            <person name="Wakamatsu A."/>
            <person name="Hayashi K."/>
            <person name="Sato H."/>
            <person name="Nagai K."/>
            <person name="Kimura K."/>
            <person name="Makita H."/>
            <person name="Sekine M."/>
            <person name="Obayashi M."/>
            <person name="Nishi T."/>
            <person name="Shibahara T."/>
            <person name="Tanaka T."/>
            <person name="Ishii S."/>
            <person name="Yamamoto J."/>
            <person name="Saito K."/>
            <person name="Kawai Y."/>
            <person name="Isono Y."/>
            <person name="Nakamura Y."/>
            <person name="Nagahari K."/>
            <person name="Murakami K."/>
            <person name="Yasuda T."/>
            <person name="Iwayanagi T."/>
            <person name="Wagatsuma M."/>
            <person name="Shiratori A."/>
            <person name="Sudo H."/>
            <person name="Hosoiri T."/>
            <person name="Kaku Y."/>
            <person name="Kodaira H."/>
            <person name="Kondo H."/>
            <person name="Sugawara M."/>
            <person name="Takahashi M."/>
            <person name="Kanda K."/>
            <person name="Yokoi T."/>
            <person name="Furuya T."/>
            <person name="Kikkawa E."/>
            <person name="Omura Y."/>
            <person name="Abe K."/>
            <person name="Kamihara K."/>
            <person name="Katsuta N."/>
            <person name="Sato K."/>
            <person name="Tanikawa M."/>
            <person name="Yamazaki M."/>
            <person name="Ninomiya K."/>
            <person name="Ishibashi T."/>
            <person name="Yamashita H."/>
            <person name="Murakawa K."/>
            <person name="Fujimori K."/>
            <person name="Tanai H."/>
            <person name="Kimata M."/>
            <person name="Watanabe M."/>
            <person name="Hiraoka S."/>
            <person name="Chiba Y."/>
            <person name="Ishida S."/>
            <person name="Ono Y."/>
            <person name="Takiguchi S."/>
            <person name="Watanabe S."/>
            <person name="Yosida M."/>
            <person name="Hotuta T."/>
            <person name="Kusano J."/>
            <person name="Kanehori K."/>
            <person name="Takahashi-Fujii A."/>
            <person name="Hara H."/>
            <person name="Tanase T.-O."/>
            <person name="Nomura Y."/>
            <person name="Togiya S."/>
            <person name="Komai F."/>
            <person name="Hara R."/>
            <person name="Takeuchi K."/>
            <person name="Arita M."/>
            <person name="Imose N."/>
            <person name="Musashino K."/>
            <person name="Yuuki H."/>
            <person name="Oshima A."/>
            <person name="Sasaki N."/>
            <person name="Aotsuka S."/>
            <person name="Yoshikawa Y."/>
            <person name="Matsunawa H."/>
            <person name="Ichihara T."/>
            <person name="Shiohata N."/>
            <person name="Sano S."/>
            <person name="Moriya S."/>
            <person name="Momiyama H."/>
            <person name="Satoh N."/>
            <person name="Takami S."/>
            <person name="Terashima Y."/>
            <person name="Suzuki O."/>
            <person name="Nakagawa S."/>
            <person name="Senoh A."/>
            <person name="Mizoguchi H."/>
            <person name="Goto Y."/>
            <person name="Shimizu F."/>
            <person name="Wakebe H."/>
            <person name="Hishigaki H."/>
            <person name="Watanabe T."/>
            <person name="Sugiyama A."/>
            <person name="Takemoto M."/>
            <person name="Kawakami B."/>
            <person name="Yamazaki M."/>
            <person name="Watanabe K."/>
            <person name="Kumagai A."/>
            <person name="Itakura S."/>
            <person name="Fukuzumi Y."/>
            <person name="Fujimori Y."/>
            <person name="Komiyama M."/>
            <person name="Tashiro H."/>
            <person name="Tanigami A."/>
            <person name="Fujiwara T."/>
            <person name="Ono T."/>
            <person name="Yamada K."/>
            <person name="Fujii Y."/>
            <person name="Ozaki K."/>
            <person name="Hirao M."/>
            <person name="Ohmori Y."/>
            <person name="Kawabata A."/>
            <person name="Hikiji T."/>
            <person name="Kobatake N."/>
            <person name="Inagaki H."/>
            <person name="Ikema Y."/>
            <person name="Okamoto S."/>
            <person name="Okitani R."/>
            <person name="Kawakami T."/>
            <person name="Noguchi S."/>
            <person name="Itoh T."/>
            <person name="Shigeta K."/>
            <person name="Senba T."/>
            <person name="Matsumura K."/>
            <person name="Nakajima Y."/>
            <person name="Mizuno T."/>
            <person name="Morinaga M."/>
            <person name="Sasaki M."/>
            <person name="Togashi T."/>
            <person name="Oyama M."/>
            <person name="Hata H."/>
            <person name="Watanabe M."/>
            <person name="Komatsu T."/>
            <person name="Mizushima-Sugano J."/>
            <person name="Satoh T."/>
            <person name="Shirai Y."/>
            <person name="Takahashi Y."/>
            <person name="Nakagawa K."/>
            <person name="Okumura K."/>
            <person name="Nagase T."/>
            <person name="Nomura N."/>
            <person name="Kikuchi H."/>
            <person name="Masuho Y."/>
            <person name="Yamashita R."/>
            <person name="Nakai K."/>
            <person name="Yada T."/>
            <person name="Nakamura Y."/>
            <person name="Ohara O."/>
            <person name="Isogai T."/>
            <person name="Sugano S."/>
        </authorList>
    </citation>
    <scope>NUCLEOTIDE SEQUENCE [LARGE SCALE MRNA] OF 352-1909 (ISOFORM 1)</scope>
    <scope>NUCLEOTIDE SEQUENCE [LARGE SCALE MRNA] OF 966-1909 (ISOFORM 3)</scope>
    <scope>NUCLEOTIDE SEQUENCE [LARGE SCALE MRNA] OF 1272-1909 (ISOFORM 5)</scope>
    <source>
        <tissue>Embryo</tissue>
        <tissue>Hepatoma</tissue>
        <tissue>Placenta</tissue>
        <tissue>Signet-ring cell carcinoma</tissue>
        <tissue>Testis</tissue>
    </source>
</reference>
<reference key="4">
    <citation type="journal article" date="2007" name="BMC Genomics">
        <title>The full-ORF clone resource of the German cDNA consortium.</title>
        <authorList>
            <person name="Bechtel S."/>
            <person name="Rosenfelder H."/>
            <person name="Duda A."/>
            <person name="Schmidt C.P."/>
            <person name="Ernst U."/>
            <person name="Wellenreuther R."/>
            <person name="Mehrle A."/>
            <person name="Schuster C."/>
            <person name="Bahr A."/>
            <person name="Bloecker H."/>
            <person name="Heubner D."/>
            <person name="Hoerlein A."/>
            <person name="Michel G."/>
            <person name="Wedler H."/>
            <person name="Koehrer K."/>
            <person name="Ottenwaelder B."/>
            <person name="Poustka A."/>
            <person name="Wiemann S."/>
            <person name="Schupp I."/>
        </authorList>
    </citation>
    <scope>NUCLEOTIDE SEQUENCE [LARGE SCALE MRNA] OF 912-1909 (ISOFORM 1)</scope>
    <source>
        <tissue>Fetal kidney</tissue>
        <tissue>Lymph node</tissue>
    </source>
</reference>
<reference key="5">
    <citation type="journal article" date="2004" name="Anal. Chem.">
        <title>Robust phosphoproteomic profiling of tyrosine phosphorylation sites from human T cells using immobilized metal affinity chromatography and tandem mass spectrometry.</title>
        <authorList>
            <person name="Brill L.M."/>
            <person name="Salomon A.R."/>
            <person name="Ficarro S.B."/>
            <person name="Mukherji M."/>
            <person name="Stettler-Gill M."/>
            <person name="Peters E.C."/>
        </authorList>
    </citation>
    <scope>IDENTIFICATION BY MASS SPECTROMETRY [LARGE SCALE ANALYSIS]</scope>
    <source>
        <tissue>Leukemic T-cell</tissue>
    </source>
</reference>
<reference key="6">
    <citation type="journal article" date="2006" name="Cell">
        <title>Global, in vivo, and site-specific phosphorylation dynamics in signaling networks.</title>
        <authorList>
            <person name="Olsen J.V."/>
            <person name="Blagoev B."/>
            <person name="Gnad F."/>
            <person name="Macek B."/>
            <person name="Kumar C."/>
            <person name="Mortensen P."/>
            <person name="Mann M."/>
        </authorList>
    </citation>
    <scope>IDENTIFICATION BY MASS SPECTROMETRY [LARGE SCALE ANALYSIS]</scope>
    <source>
        <tissue>Cervix carcinoma</tissue>
    </source>
</reference>
<reference key="7">
    <citation type="journal article" date="2008" name="Proc. Natl. Acad. Sci. U.S.A.">
        <title>A quantitative atlas of mitotic phosphorylation.</title>
        <authorList>
            <person name="Dephoure N."/>
            <person name="Zhou C."/>
            <person name="Villen J."/>
            <person name="Beausoleil S.A."/>
            <person name="Bakalarski C.E."/>
            <person name="Elledge S.J."/>
            <person name="Gygi S.P."/>
        </authorList>
    </citation>
    <scope>PHOSPHORYLATION [LARGE SCALE ANALYSIS] AT SER-741; SER-965; SER-968; SER-973; SER-989; SER-1003; SER-1046; SER-1099; SER-1126; SER-1225; SER-1244; SER-1278; SER-1325; SER-1623 AND SER-1627</scope>
    <scope>IDENTIFICATION BY MASS SPECTROMETRY [LARGE SCALE ANALYSIS]</scope>
    <source>
        <tissue>Cervix carcinoma</tissue>
    </source>
</reference>
<reference key="8">
    <citation type="journal article" date="2009" name="Anal. Chem.">
        <title>Lys-N and trypsin cover complementary parts of the phosphoproteome in a refined SCX-based approach.</title>
        <authorList>
            <person name="Gauci S."/>
            <person name="Helbig A.O."/>
            <person name="Slijper M."/>
            <person name="Krijgsveld J."/>
            <person name="Heck A.J."/>
            <person name="Mohammed S."/>
        </authorList>
    </citation>
    <scope>IDENTIFICATION BY MASS SPECTROMETRY [LARGE SCALE ANALYSIS]</scope>
</reference>
<reference key="9">
    <citation type="journal article" date="2009" name="Sci. Signal.">
        <title>Quantitative phosphoproteomic analysis of T cell receptor signaling reveals system-wide modulation of protein-protein interactions.</title>
        <authorList>
            <person name="Mayya V."/>
            <person name="Lundgren D.H."/>
            <person name="Hwang S.-I."/>
            <person name="Rezaul K."/>
            <person name="Wu L."/>
            <person name="Eng J.K."/>
            <person name="Rodionov V."/>
            <person name="Han D.K."/>
        </authorList>
    </citation>
    <scope>PHOSPHORYLATION [LARGE SCALE ANALYSIS] AT SER-973; SER-989; SER-1278 AND SER-1346</scope>
    <scope>IDENTIFICATION BY MASS SPECTROMETRY [LARGE SCALE ANALYSIS]</scope>
    <source>
        <tissue>Leukemic T-cell</tissue>
    </source>
</reference>
<reference key="10">
    <citation type="journal article" date="2010" name="J. Cell Biol.">
        <title>Family-wide characterization of the DENN domain Rab GDP-GTP exchange factors.</title>
        <authorList>
            <person name="Yoshimura S."/>
            <person name="Gerondopoulos A."/>
            <person name="Linford A."/>
            <person name="Rigden D.J."/>
            <person name="Barr F.A."/>
        </authorList>
    </citation>
    <scope>FUNCTION AS GUANYL-NUCLEOTIDE EXCHANGE FACTOR</scope>
</reference>
<reference key="11">
    <citation type="journal article" date="2010" name="Sci. Signal.">
        <title>Quantitative phosphoproteomics reveals widespread full phosphorylation site occupancy during mitosis.</title>
        <authorList>
            <person name="Olsen J.V."/>
            <person name="Vermeulen M."/>
            <person name="Santamaria A."/>
            <person name="Kumar C."/>
            <person name="Miller M.L."/>
            <person name="Jensen L.J."/>
            <person name="Gnad F."/>
            <person name="Cox J."/>
            <person name="Jensen T.S."/>
            <person name="Nigg E.A."/>
            <person name="Brunak S."/>
            <person name="Mann M."/>
        </authorList>
    </citation>
    <scope>PHOSPHORYLATION [LARGE SCALE ANALYSIS] AT SER-1225 AND SER-1623</scope>
    <scope>PHOSPHORYLATION [LARGE SCALE ANALYSIS] AT SER-953 (ISOFORM 2)</scope>
    <scope>IDENTIFICATION BY MASS SPECTROMETRY [LARGE SCALE ANALYSIS]</scope>
    <source>
        <tissue>Cervix carcinoma</tissue>
    </source>
</reference>
<reference key="12">
    <citation type="journal article" date="2011" name="BMC Syst. Biol.">
        <title>Initial characterization of the human central proteome.</title>
        <authorList>
            <person name="Burkard T.R."/>
            <person name="Planyavsky M."/>
            <person name="Kaupe I."/>
            <person name="Breitwieser F.P."/>
            <person name="Buerckstuemmer T."/>
            <person name="Bennett K.L."/>
            <person name="Superti-Furga G."/>
            <person name="Colinge J."/>
        </authorList>
    </citation>
    <scope>IDENTIFICATION BY MASS SPECTROMETRY [LARGE SCALE ANALYSIS]</scope>
</reference>
<reference key="13">
    <citation type="journal article" date="2011" name="Sci. Signal.">
        <title>System-wide temporal characterization of the proteome and phosphoproteome of human embryonic stem cell differentiation.</title>
        <authorList>
            <person name="Rigbolt K.T."/>
            <person name="Prokhorova T.A."/>
            <person name="Akimov V."/>
            <person name="Henningsen J."/>
            <person name="Johansen P.T."/>
            <person name="Kratchmarova I."/>
            <person name="Kassem M."/>
            <person name="Mann M."/>
            <person name="Olsen J.V."/>
            <person name="Blagoev B."/>
        </authorList>
    </citation>
    <scope>PHOSPHORYLATION [LARGE SCALE ANALYSIS] AT SER-1184</scope>
    <scope>IDENTIFICATION BY MASS SPECTROMETRY [LARGE SCALE ANALYSIS]</scope>
</reference>
<reference key="14">
    <citation type="journal article" date="2013" name="J. Proteome Res.">
        <title>Toward a comprehensive characterization of a human cancer cell phosphoproteome.</title>
        <authorList>
            <person name="Zhou H."/>
            <person name="Di Palma S."/>
            <person name="Preisinger C."/>
            <person name="Peng M."/>
            <person name="Polat A.N."/>
            <person name="Heck A.J."/>
            <person name="Mohammed S."/>
        </authorList>
    </citation>
    <scope>PHOSPHORYLATION [LARGE SCALE ANALYSIS] AT SER-703; SER-737; SER-741; SER-968; SER-973; SER-989; SER-996; SER-1061; SER-1099; SER-1184; SER-1225; SER-1278; SER-1325; SER-1337; SER-1346; SER-1623 AND SER-1629</scope>
    <scope>IDENTIFICATION BY MASS SPECTROMETRY [LARGE SCALE ANALYSIS]</scope>
    <source>
        <tissue>Cervix carcinoma</tissue>
        <tissue>Erythroleukemia</tissue>
    </source>
</reference>
<reference key="15">
    <citation type="journal article" date="2014" name="J. Proteomics">
        <title>An enzyme assisted RP-RPLC approach for in-depth analysis of human liver phosphoproteome.</title>
        <authorList>
            <person name="Bian Y."/>
            <person name="Song C."/>
            <person name="Cheng K."/>
            <person name="Dong M."/>
            <person name="Wang F."/>
            <person name="Huang J."/>
            <person name="Sun D."/>
            <person name="Wang L."/>
            <person name="Ye M."/>
            <person name="Zou H."/>
        </authorList>
    </citation>
    <scope>PHOSPHORYLATION [LARGE SCALE ANALYSIS] AT SER-965; SER-968; SER-973; THR-975; SER-989; SER-1278 AND SER-1799</scope>
    <scope>PHOSPHORYLATION [LARGE SCALE ANALYSIS] AT SER-953 (ISOFORM 2)</scope>
    <scope>IDENTIFICATION BY MASS SPECTROMETRY [LARGE SCALE ANALYSIS]</scope>
    <source>
        <tissue>Liver</tissue>
    </source>
</reference>
<comment type="function">
    <text evidence="6">Guanine nucleotide exchange factor (GEF) activating RAB10. Promotes the exchange of GDP to GTP, converting inactive GDP-bound RAB10 into its active GTP-bound form. Thereby, stimulates SLC2A4/GLUT4 glucose transporter-enriched vesicles delivery to the plasma membrane in response to insulin.</text>
</comment>
<comment type="subcellular location">
    <subcellularLocation>
        <location>Cytoplasmic vesicle membrane</location>
    </subcellularLocation>
    <subcellularLocation>
        <location>Cell membrane</location>
    </subcellularLocation>
    <subcellularLocation>
        <location>Cytoplasm</location>
        <location>Cytosol</location>
    </subcellularLocation>
    <text>Associates with SLC2A4/GLUT4 storage vesicles.</text>
</comment>
<comment type="alternative products">
    <event type="alternative splicing"/>
    <isoform>
        <id>Q5VZ89-1</id>
        <name>1</name>
        <sequence type="displayed"/>
    </isoform>
    <isoform>
        <id>Q5VZ89-3</id>
        <name>3</name>
        <sequence type="described" ref="VSP_027384 VSP_027386"/>
    </isoform>
    <isoform>
        <id>Q5VZ89-5</id>
        <name>5</name>
        <sequence type="described" ref="VSP_027382 VSP_027383"/>
    </isoform>
    <isoform>
        <id>Q5VZ89-7</id>
        <name>2</name>
        <sequence type="described" ref="VSP_027379"/>
    </isoform>
</comment>
<comment type="PTM">
    <text evidence="1">Phosphorylated in response to insulin.</text>
</comment>
<comment type="sequence caution" evidence="8">
    <conflict type="erroneous initiation">
        <sequence resource="EMBL-CDS" id="BAA91294"/>
    </conflict>
    <text>Truncated N-terminus.</text>
</comment>
<comment type="sequence caution" evidence="8">
    <conflict type="erroneous initiation">
        <sequence resource="EMBL-CDS" id="BAA91478"/>
    </conflict>
    <text>Truncated N-terminus.</text>
</comment>
<comment type="sequence caution" evidence="8">
    <conflict type="erroneous initiation">
        <sequence resource="EMBL-CDS" id="BAA92039"/>
    </conflict>
    <text>Truncated N-terminus.</text>
</comment>
<comment type="sequence caution" evidence="8">
    <conflict type="erroneous initiation">
        <sequence resource="EMBL-CDS" id="BAB15221"/>
    </conflict>
    <text>Truncated N-terminus.</text>
</comment>
<comment type="sequence caution" evidence="8">
    <conflict type="erroneous initiation">
        <sequence resource="EMBL-CDS" id="BAC86313"/>
    </conflict>
    <text>Truncated N-terminus.</text>
</comment>
<comment type="sequence caution" evidence="8">
    <conflict type="miscellaneous discrepancy">
        <sequence resource="EMBL-CDS" id="CAH10466"/>
    </conflict>
    <text>Probable cloning artifact.</text>
</comment>
<gene>
    <name type="primary">DENND4C</name>
    <name type="synonym">C9orf55</name>
    <name type="synonym">C9orf55B</name>
</gene>
<keyword id="KW-0002">3D-structure</keyword>
<keyword id="KW-0025">Alternative splicing</keyword>
<keyword id="KW-1003">Cell membrane</keyword>
<keyword id="KW-0963">Cytoplasm</keyword>
<keyword id="KW-0968">Cytoplasmic vesicle</keyword>
<keyword id="KW-0344">Guanine-nucleotide releasing factor</keyword>
<keyword id="KW-0472">Membrane</keyword>
<keyword id="KW-0597">Phosphoprotein</keyword>
<keyword id="KW-0653">Protein transport</keyword>
<keyword id="KW-1267">Proteomics identification</keyword>
<keyword id="KW-1185">Reference proteome</keyword>
<keyword id="KW-0813">Transport</keyword>
<sequence length="1909" mass="212711">MIEDKGPRVTDYFVVAGLTDTSTLLDQEINRLDTKSTGPKAPITDIAIIIKSAGETVPEGYTCVEATPSALQANLNYGSLKSPELFLCYKRGRDKPPLTDIGVLYEGKERLIPGCEVILATPYGRCANVNNSSTTSQRIFITYRRAPPVRPQNSLAVTDICVIVTSKGETPPHTFCKVDKNLNCGMWGSSVFLCYKKSVPASNAIAYKAGLIFRYPEEDYESFPLSESDVPLFCLPMGATIECWDPETKYPLPVFSTFVLTGSSAKKVYGAAIQFYEPYSRELLSEKQLMHLGLLTPVERKMVSKSINTNKCICLLSHWPFFEAFRKFLMFIYKLSVSGPHPLPIEKHISHFMQNIPFPSPQRPRILVQLSVHDALILSQPVSTPLPLSGANFSTLLMNLGPENCATLLLFVLLESKILLHSLRPAVLTGVAEAVVAMIFPFQWQCPYIPLCPLSLAAVLSAPLPFIVGVDSRYFDLHDPPQDVVCIDLDTNMLYVSDEKKNMNWKQLPKKPCKNLLSTLKKLYPQLSSVHQKTQEGSAIDMTPIEADFSWQKKMTQLEMEIQEAFLRFMASILKGYRTYLRPITEAPSNKATAADSLFDRQGFLKSRDRAYAKFYTLLSKTQIFIRFIEECSFVSDKDTGLAFFDDCIEKLFPDKGTEKTDKVDFDSAEDTRLIELDDSQKSEHTVFIMPPEPPPDDGKDLSPKYSYKYFPRLDLKLFDRPQELKLCFSRHPTGNSITKSPPLMAKRTKQEIKTAHKLAKRCYTNPPQWAKCLFSHCYSLWFICLPAYVRVSHPKVRALQQAYDVLIKMRKTDVDPLDEVCYRVVMQLCGLWGHPVLAVRVLFEMKTARIKPNAITYGYYNKVVLESPWPSSTRSGIFLWTKVRNVVRGLAQFRQPLKKTVQRSQVSSISGGQSDQGYGSKDELIKDDAEIHVPEEQAARELITKTKMQTEEVCDASAIVAKHSQPSPEPHSPTEPPAWGSSIVKVPSGIFDVNSRKSSTGSISNVLFSTQDPVEDAVFGEATNLKKNGDRGEKRQKHFPERSCSFSSESRAGMLLKKSSLDSNSSEMAIMMGADAKILTAALTCPKTSLLHIARTHSFENVSCHLPDSRTCMSESTWNPEHRSSPVPEMLEESQELLEPVVDDVPKTTATVDTYESLLSDSNSNQSRDLKTVSKDLRNKRSSLYGIAKVVQREDVETGLDPLSLLATECTGGKTPDSEDKLFSPVIARNLADEIESYMNLKSPLGSKSSSMELHREENRESGMTTAFIHALERRSSLPLDHGSPAQENPESEKSSPAVSRSKTFTGRFKQQTPSRTHKERSTSLSALVRSSPHGSLGSVVNSLSGLKLDNILSGPKIDVLKSGMKQAATVASKMWVAVASAYSYSDDEEETNRDYSFPAGLEDHILGENISPNTSISGLVPSELTQSNTSLGSSSSSGDVGKLHYPTGEVPFPRGMKGQDFEKSDHGSSQNTSMSSIYQNCAMEVLMSSCSQCRACGALVYDEEIMAGWTADDSNLNTACPFCKSNFLPLLNIEFKDLRGSASFFLKPSTSGDSLQSGSIPLANESLEHKPVSSLAEPDLINFMDFPKHNQIITEETGSAVEPSDEIKRASGDVQTMKISSVPNSLSKRNVSLTRSHSVGGPLQNIDFTQRPFHGISTVSLPNSLQEVVDPLGKRPNPPPVSVPYLSPLVLRKELESLLENEGDQVIHTSSFINQHPIIFWNLVWYFRRLDLPSNLPGLILTSEHCNEGVQLPLSSLSQDSKLVYIQLLWDNINLHQEPREPLYVSWRNFNSEKKSSLLSEEQQETSTLVETIRQSIQHNNVLKPINLLSQQMKPGMKRQRSLYREILFLSLVSLGRENIDIEAFDNEYGIAYNSLSSEILERLQKIDAPPSASVEWCRKCFGAPLI</sequence>
<proteinExistence type="evidence at protein level"/>
<protein>
    <recommendedName>
        <fullName>DENN domain-containing protein 4C</fullName>
    </recommendedName>
</protein>
<evidence type="ECO:0000250" key="1"/>
<evidence type="ECO:0000250" key="2">
    <source>
        <dbReference type="UniProtKB" id="A6H8H2"/>
    </source>
</evidence>
<evidence type="ECO:0000255" key="3">
    <source>
        <dbReference type="PROSITE-ProRule" id="PRU00304"/>
    </source>
</evidence>
<evidence type="ECO:0000255" key="4">
    <source>
        <dbReference type="PROSITE-ProRule" id="PRU00831"/>
    </source>
</evidence>
<evidence type="ECO:0000256" key="5">
    <source>
        <dbReference type="SAM" id="MobiDB-lite"/>
    </source>
</evidence>
<evidence type="ECO:0000269" key="6">
    <source>
    </source>
</evidence>
<evidence type="ECO:0000303" key="7">
    <source>
    </source>
</evidence>
<evidence type="ECO:0000305" key="8"/>
<evidence type="ECO:0007744" key="9">
    <source>
    </source>
</evidence>
<evidence type="ECO:0007744" key="10">
    <source>
    </source>
</evidence>
<evidence type="ECO:0007744" key="11">
    <source>
    </source>
</evidence>
<evidence type="ECO:0007744" key="12">
    <source>
    </source>
</evidence>
<evidence type="ECO:0007744" key="13">
    <source>
    </source>
</evidence>
<evidence type="ECO:0007744" key="14">
    <source>
    </source>
</evidence>
<accession>Q5VZ89</accession>
<accession>A2A3R1</accession>
<accession>A2A3R2</accession>
<accession>A2A3R3</accession>
<accession>A2A3R9</accession>
<accession>Q6AI48</accession>
<accession>Q6ZUB3</accession>
<accession>Q8NCY7</accession>
<accession>Q9H6N4</accession>
<accession>Q9NUT1</accession>
<accession>Q9NWA5</accession>
<accession>Q9NWT3</accession>
<accession>R4GN35</accession>
<accession>R4GNB2</accession>
<dbReference type="EMBL" id="AL161909">
    <property type="status" value="NOT_ANNOTATED_CDS"/>
    <property type="molecule type" value="Genomic_DNA"/>
</dbReference>
<dbReference type="EMBL" id="AL391834">
    <property type="status" value="NOT_ANNOTATED_CDS"/>
    <property type="molecule type" value="Genomic_DNA"/>
</dbReference>
<dbReference type="EMBL" id="CH471071">
    <property type="protein sequence ID" value="EAW58645.1"/>
    <property type="molecule type" value="Genomic_DNA"/>
</dbReference>
<dbReference type="EMBL" id="AK000627">
    <property type="protein sequence ID" value="BAA91294.1"/>
    <property type="status" value="ALT_INIT"/>
    <property type="molecule type" value="mRNA"/>
</dbReference>
<dbReference type="EMBL" id="AK001046">
    <property type="protein sequence ID" value="BAA91478.1"/>
    <property type="status" value="ALT_INIT"/>
    <property type="molecule type" value="mRNA"/>
</dbReference>
<dbReference type="EMBL" id="AK002020">
    <property type="protein sequence ID" value="BAA92039.1"/>
    <property type="status" value="ALT_INIT"/>
    <property type="molecule type" value="mRNA"/>
</dbReference>
<dbReference type="EMBL" id="AK025705">
    <property type="protein sequence ID" value="BAB15221.1"/>
    <property type="status" value="ALT_INIT"/>
    <property type="molecule type" value="mRNA"/>
</dbReference>
<dbReference type="EMBL" id="AK125842">
    <property type="protein sequence ID" value="BAC86313.1"/>
    <property type="status" value="ALT_INIT"/>
    <property type="molecule type" value="mRNA"/>
</dbReference>
<dbReference type="EMBL" id="AL834521">
    <property type="protein sequence ID" value="CAD39177.1"/>
    <property type="molecule type" value="mRNA"/>
</dbReference>
<dbReference type="EMBL" id="CR627367">
    <property type="protein sequence ID" value="CAH10466.1"/>
    <property type="status" value="ALT_SEQ"/>
    <property type="molecule type" value="mRNA"/>
</dbReference>
<dbReference type="CCDS" id="CCDS6491.3">
    <molecule id="Q5VZ89-1"/>
</dbReference>
<dbReference type="CCDS" id="CCDS83349.1">
    <molecule id="Q5VZ89-7"/>
</dbReference>
<dbReference type="RefSeq" id="NP_001317569.1">
    <molecule id="Q5VZ89-7"/>
    <property type="nucleotide sequence ID" value="NM_001330640.2"/>
</dbReference>
<dbReference type="RefSeq" id="NP_001372971.1">
    <molecule id="Q5VZ89-3"/>
    <property type="nucleotide sequence ID" value="NM_001386042.1"/>
</dbReference>
<dbReference type="RefSeq" id="NP_001372976.1">
    <molecule id="Q5VZ89-7"/>
    <property type="nucleotide sequence ID" value="NM_001386047.1"/>
</dbReference>
<dbReference type="RefSeq" id="NP_060395.5">
    <molecule id="Q5VZ89-1"/>
    <property type="nucleotide sequence ID" value="NM_017925.6"/>
</dbReference>
<dbReference type="RefSeq" id="XP_047279540.1">
    <molecule id="Q5VZ89-1"/>
    <property type="nucleotide sequence ID" value="XM_047423584.1"/>
</dbReference>
<dbReference type="RefSeq" id="XP_054219245.1">
    <molecule id="Q5VZ89-1"/>
    <property type="nucleotide sequence ID" value="XM_054363270.1"/>
</dbReference>
<dbReference type="PDB" id="8VOD">
    <property type="method" value="X-ray"/>
    <property type="resolution" value="2.12 A"/>
    <property type="chains" value="B=1189-1206"/>
</dbReference>
<dbReference type="PDBsum" id="8VOD"/>
<dbReference type="SMR" id="Q5VZ89"/>
<dbReference type="BioGRID" id="120799">
    <property type="interactions" value="145"/>
</dbReference>
<dbReference type="FunCoup" id="Q5VZ89">
    <property type="interactions" value="3417"/>
</dbReference>
<dbReference type="IntAct" id="Q5VZ89">
    <property type="interactions" value="45"/>
</dbReference>
<dbReference type="MINT" id="Q5VZ89"/>
<dbReference type="STRING" id="9606.ENSP00000473469"/>
<dbReference type="GlyGen" id="Q5VZ89">
    <property type="glycosylation" value="4 sites, 1 O-linked glycan (3 sites)"/>
</dbReference>
<dbReference type="iPTMnet" id="Q5VZ89"/>
<dbReference type="PhosphoSitePlus" id="Q5VZ89"/>
<dbReference type="BioMuta" id="DENND4C"/>
<dbReference type="DMDM" id="158937337"/>
<dbReference type="jPOST" id="Q5VZ89"/>
<dbReference type="MassIVE" id="Q5VZ89"/>
<dbReference type="PaxDb" id="9606-ENSP00000473565"/>
<dbReference type="PeptideAtlas" id="Q5VZ89"/>
<dbReference type="ProteomicsDB" id="65680">
    <molecule id="Q5VZ89-1"/>
</dbReference>
<dbReference type="ProteomicsDB" id="65682">
    <molecule id="Q5VZ89-3"/>
</dbReference>
<dbReference type="ProteomicsDB" id="65684">
    <molecule id="Q5VZ89-5"/>
</dbReference>
<dbReference type="Pumba" id="Q5VZ89"/>
<dbReference type="Antibodypedia" id="10280">
    <property type="antibodies" value="85 antibodies from 18 providers"/>
</dbReference>
<dbReference type="Ensembl" id="ENST00000434457.7">
    <molecule id="Q5VZ89-7"/>
    <property type="protein sequence ID" value="ENSP00000473469.1"/>
    <property type="gene ID" value="ENSG00000137145.21"/>
</dbReference>
<dbReference type="Ensembl" id="ENST00000602925.5">
    <molecule id="Q5VZ89-1"/>
    <property type="protein sequence ID" value="ENSP00000473565.1"/>
    <property type="gene ID" value="ENSG00000137145.21"/>
</dbReference>
<dbReference type="GeneID" id="55667"/>
<dbReference type="KEGG" id="hsa:55667"/>
<dbReference type="MANE-Select" id="ENST00000434457.7">
    <molecule id="Q5VZ89-7"/>
    <property type="protein sequence ID" value="ENSP00000473469.1"/>
    <property type="RefSeq nucleotide sequence ID" value="NM_001330640.2"/>
    <property type="RefSeq protein sequence ID" value="NP_001317569.1"/>
</dbReference>
<dbReference type="UCSC" id="uc031tcw.2">
    <property type="organism name" value="human"/>
</dbReference>
<dbReference type="AGR" id="HGNC:26079"/>
<dbReference type="CTD" id="55667"/>
<dbReference type="DisGeNET" id="55667"/>
<dbReference type="GeneCards" id="DENND4C"/>
<dbReference type="HGNC" id="HGNC:26079">
    <property type="gene designation" value="DENND4C"/>
</dbReference>
<dbReference type="HPA" id="ENSG00000137145">
    <property type="expression patterns" value="Low tissue specificity"/>
</dbReference>
<dbReference type="neXtProt" id="NX_Q5VZ89"/>
<dbReference type="OpenTargets" id="ENSG00000137145"/>
<dbReference type="PharmGKB" id="PA134939495"/>
<dbReference type="VEuPathDB" id="HostDB:ENSG00000137145"/>
<dbReference type="eggNOG" id="KOG2127">
    <property type="taxonomic scope" value="Eukaryota"/>
</dbReference>
<dbReference type="GeneTree" id="ENSGT00940000158215"/>
<dbReference type="InParanoid" id="Q5VZ89"/>
<dbReference type="OMA" id="ICYRVMM"/>
<dbReference type="OrthoDB" id="75250at2759"/>
<dbReference type="PAN-GO" id="Q5VZ89">
    <property type="GO annotations" value="2 GO annotations based on evolutionary models"/>
</dbReference>
<dbReference type="PhylomeDB" id="Q5VZ89"/>
<dbReference type="TreeFam" id="TF313237"/>
<dbReference type="PathwayCommons" id="Q5VZ89"/>
<dbReference type="Reactome" id="R-HSA-8876198">
    <property type="pathway name" value="RAB GEFs exchange GTP for GDP on RABs"/>
</dbReference>
<dbReference type="SignaLink" id="Q5VZ89"/>
<dbReference type="BioGRID-ORCS" id="55667">
    <property type="hits" value="15 hits in 1153 CRISPR screens"/>
</dbReference>
<dbReference type="ChiTaRS" id="DENND4C">
    <property type="organism name" value="human"/>
</dbReference>
<dbReference type="GenomeRNAi" id="55667"/>
<dbReference type="Pharos" id="Q5VZ89">
    <property type="development level" value="Tbio"/>
</dbReference>
<dbReference type="PRO" id="PR:Q5VZ89"/>
<dbReference type="Proteomes" id="UP000005640">
    <property type="component" value="Chromosome 9"/>
</dbReference>
<dbReference type="RNAct" id="Q5VZ89">
    <property type="molecule type" value="protein"/>
</dbReference>
<dbReference type="Bgee" id="ENSG00000137145">
    <property type="expression patterns" value="Expressed in jejunal mucosa and 203 other cell types or tissues"/>
</dbReference>
<dbReference type="ExpressionAtlas" id="Q5VZ89">
    <property type="expression patterns" value="baseline and differential"/>
</dbReference>
<dbReference type="GO" id="GO:0031410">
    <property type="term" value="C:cytoplasmic vesicle"/>
    <property type="evidence" value="ECO:0000318"/>
    <property type="project" value="GO_Central"/>
</dbReference>
<dbReference type="GO" id="GO:0030659">
    <property type="term" value="C:cytoplasmic vesicle membrane"/>
    <property type="evidence" value="ECO:0007669"/>
    <property type="project" value="UniProtKB-SubCell"/>
</dbReference>
<dbReference type="GO" id="GO:0005829">
    <property type="term" value="C:cytosol"/>
    <property type="evidence" value="ECO:0000314"/>
    <property type="project" value="HPA"/>
</dbReference>
<dbReference type="GO" id="GO:0005794">
    <property type="term" value="C:Golgi apparatus"/>
    <property type="evidence" value="ECO:0000314"/>
    <property type="project" value="HPA"/>
</dbReference>
<dbReference type="GO" id="GO:0032593">
    <property type="term" value="C:insulin-responsive compartment"/>
    <property type="evidence" value="ECO:0000250"/>
    <property type="project" value="UniProtKB"/>
</dbReference>
<dbReference type="GO" id="GO:0043231">
    <property type="term" value="C:intracellular membrane-bounded organelle"/>
    <property type="evidence" value="ECO:0000314"/>
    <property type="project" value="HPA"/>
</dbReference>
<dbReference type="GO" id="GO:0005886">
    <property type="term" value="C:plasma membrane"/>
    <property type="evidence" value="ECO:0000250"/>
    <property type="project" value="UniProtKB"/>
</dbReference>
<dbReference type="GO" id="GO:0030904">
    <property type="term" value="C:retromer complex"/>
    <property type="evidence" value="ECO:0007669"/>
    <property type="project" value="Ensembl"/>
</dbReference>
<dbReference type="GO" id="GO:0005085">
    <property type="term" value="F:guanyl-nucleotide exchange factor activity"/>
    <property type="evidence" value="ECO:0000314"/>
    <property type="project" value="UniProtKB"/>
</dbReference>
<dbReference type="GO" id="GO:0032869">
    <property type="term" value="P:cellular response to insulin stimulus"/>
    <property type="evidence" value="ECO:0000250"/>
    <property type="project" value="UniProtKB"/>
</dbReference>
<dbReference type="GO" id="GO:0072659">
    <property type="term" value="P:protein localization to plasma membrane"/>
    <property type="evidence" value="ECO:0000250"/>
    <property type="project" value="UniProtKB"/>
</dbReference>
<dbReference type="GO" id="GO:0015031">
    <property type="term" value="P:protein transport"/>
    <property type="evidence" value="ECO:0007669"/>
    <property type="project" value="UniProtKB-KW"/>
</dbReference>
<dbReference type="GO" id="GO:0032483">
    <property type="term" value="P:regulation of Rab protein signal transduction"/>
    <property type="evidence" value="ECO:0000318"/>
    <property type="project" value="GO_Central"/>
</dbReference>
<dbReference type="FunFam" id="1.25.40.10:FF:000042">
    <property type="entry name" value="C-myc promoter-binding protein isoform X1"/>
    <property type="match status" value="1"/>
</dbReference>
<dbReference type="FunFam" id="2.100.10.50:FF:000001">
    <property type="entry name" value="DENN domain containing 4C"/>
    <property type="match status" value="1"/>
</dbReference>
<dbReference type="Gene3D" id="2.100.10.50">
    <property type="match status" value="1"/>
</dbReference>
<dbReference type="Gene3D" id="3.40.50.11500">
    <property type="match status" value="1"/>
</dbReference>
<dbReference type="Gene3D" id="1.25.40.10">
    <property type="entry name" value="Tetratricopeptide repeat domain"/>
    <property type="match status" value="1"/>
</dbReference>
<dbReference type="InterPro" id="IPR001194">
    <property type="entry name" value="cDENN_dom"/>
</dbReference>
<dbReference type="InterPro" id="IPR005112">
    <property type="entry name" value="dDENN_dom"/>
</dbReference>
<dbReference type="InterPro" id="IPR043153">
    <property type="entry name" value="DENN_C"/>
</dbReference>
<dbReference type="InterPro" id="IPR051696">
    <property type="entry name" value="DENN_Domain_GEFs"/>
</dbReference>
<dbReference type="InterPro" id="IPR023341">
    <property type="entry name" value="MABP"/>
</dbReference>
<dbReference type="InterPro" id="IPR011990">
    <property type="entry name" value="TPR-like_helical_dom_sf"/>
</dbReference>
<dbReference type="InterPro" id="IPR037516">
    <property type="entry name" value="Tripartite_DENN"/>
</dbReference>
<dbReference type="InterPro" id="IPR005113">
    <property type="entry name" value="uDENN_dom"/>
</dbReference>
<dbReference type="PANTHER" id="PTHR12296">
    <property type="entry name" value="DENN DOMAIN-CONTAINING PROTEIN 4"/>
    <property type="match status" value="1"/>
</dbReference>
<dbReference type="PANTHER" id="PTHR12296:SF17">
    <property type="entry name" value="DENN DOMAIN-CONTAINING PROTEIN 4C"/>
    <property type="match status" value="1"/>
</dbReference>
<dbReference type="Pfam" id="PF03455">
    <property type="entry name" value="dDENN"/>
    <property type="match status" value="1"/>
</dbReference>
<dbReference type="Pfam" id="PF02141">
    <property type="entry name" value="DENN"/>
    <property type="match status" value="1"/>
</dbReference>
<dbReference type="Pfam" id="PF03456">
    <property type="entry name" value="uDENN"/>
    <property type="match status" value="1"/>
</dbReference>
<dbReference type="SMART" id="SM00801">
    <property type="entry name" value="dDENN"/>
    <property type="match status" value="1"/>
</dbReference>
<dbReference type="SMART" id="SM00799">
    <property type="entry name" value="DENN"/>
    <property type="match status" value="1"/>
</dbReference>
<dbReference type="SMART" id="SM00800">
    <property type="entry name" value="uDENN"/>
    <property type="match status" value="1"/>
</dbReference>
<dbReference type="PROSITE" id="PS50211">
    <property type="entry name" value="DENN"/>
    <property type="match status" value="1"/>
</dbReference>
<dbReference type="PROSITE" id="PS51498">
    <property type="entry name" value="MABP"/>
    <property type="match status" value="1"/>
</dbReference>
<organism>
    <name type="scientific">Homo sapiens</name>
    <name type="common">Human</name>
    <dbReference type="NCBI Taxonomy" id="9606"/>
    <lineage>
        <taxon>Eukaryota</taxon>
        <taxon>Metazoa</taxon>
        <taxon>Chordata</taxon>
        <taxon>Craniata</taxon>
        <taxon>Vertebrata</taxon>
        <taxon>Euteleostomi</taxon>
        <taxon>Mammalia</taxon>
        <taxon>Eutheria</taxon>
        <taxon>Euarchontoglires</taxon>
        <taxon>Primates</taxon>
        <taxon>Haplorrhini</taxon>
        <taxon>Catarrhini</taxon>
        <taxon>Hominidae</taxon>
        <taxon>Homo</taxon>
    </lineage>
</organism>
<name>DEN4C_HUMAN</name>